<feature type="chain" id="PRO_0000174059" description="Pesticidal crystal protein Cry2Ad">
    <location>
        <begin position="1"/>
        <end position="633"/>
    </location>
</feature>
<protein>
    <recommendedName>
        <fullName>Pesticidal crystal protein Cry2Ad</fullName>
    </recommendedName>
    <alternativeName>
        <fullName>71 kDa crystal protein</fullName>
    </alternativeName>
    <alternativeName>
        <fullName>Crystaline entomocidal protoxin</fullName>
    </alternativeName>
    <alternativeName>
        <fullName>Insecticidal delta-endotoxin CryIIA(d)</fullName>
    </alternativeName>
</protein>
<organism>
    <name type="scientific">Bacillus thuringiensis</name>
    <dbReference type="NCBI Taxonomy" id="1428"/>
    <lineage>
        <taxon>Bacteria</taxon>
        <taxon>Bacillati</taxon>
        <taxon>Bacillota</taxon>
        <taxon>Bacilli</taxon>
        <taxon>Bacillales</taxon>
        <taxon>Bacillaceae</taxon>
        <taxon>Bacillus</taxon>
        <taxon>Bacillus cereus group</taxon>
    </lineage>
</organism>
<accession>Q9RMG3</accession>
<evidence type="ECO:0000305" key="1"/>
<dbReference type="EMBL" id="AF200816">
    <property type="protein sequence ID" value="AAF09583.1"/>
    <property type="molecule type" value="Genomic_DNA"/>
</dbReference>
<dbReference type="SMR" id="Q9RMG3"/>
<dbReference type="GO" id="GO:0005102">
    <property type="term" value="F:signaling receptor binding"/>
    <property type="evidence" value="ECO:0007669"/>
    <property type="project" value="InterPro"/>
</dbReference>
<dbReference type="GO" id="GO:0090729">
    <property type="term" value="F:toxin activity"/>
    <property type="evidence" value="ECO:0007669"/>
    <property type="project" value="UniProtKB-KW"/>
</dbReference>
<dbReference type="GO" id="GO:0030435">
    <property type="term" value="P:sporulation resulting in formation of a cellular spore"/>
    <property type="evidence" value="ECO:0007669"/>
    <property type="project" value="UniProtKB-KW"/>
</dbReference>
<dbReference type="GO" id="GO:0001907">
    <property type="term" value="P:symbiont-mediated killing of host cell"/>
    <property type="evidence" value="ECO:0007669"/>
    <property type="project" value="InterPro"/>
</dbReference>
<dbReference type="Gene3D" id="2.60.120.260">
    <property type="entry name" value="Galactose-binding domain-like"/>
    <property type="match status" value="1"/>
</dbReference>
<dbReference type="Gene3D" id="2.100.10.10">
    <property type="entry name" value="Pesticidal crystal protein, central domain"/>
    <property type="match status" value="1"/>
</dbReference>
<dbReference type="Gene3D" id="1.20.190.10">
    <property type="entry name" value="Pesticidal crystal protein, N-terminal domain"/>
    <property type="match status" value="1"/>
</dbReference>
<dbReference type="InterPro" id="IPR008979">
    <property type="entry name" value="Galactose-bd-like_sf"/>
</dbReference>
<dbReference type="InterPro" id="IPR038979">
    <property type="entry name" value="Pest_crys"/>
</dbReference>
<dbReference type="InterPro" id="IPR005638">
    <property type="entry name" value="Pest_crys_dom-III"/>
</dbReference>
<dbReference type="InterPro" id="IPR005639">
    <property type="entry name" value="Pest_crys_dom_I"/>
</dbReference>
<dbReference type="InterPro" id="IPR036716">
    <property type="entry name" value="Pest_crys_N_sf"/>
</dbReference>
<dbReference type="InterPro" id="IPR015214">
    <property type="entry name" value="Pest_cryst_cen_dom_Cry2A/18"/>
</dbReference>
<dbReference type="InterPro" id="IPR036399">
    <property type="entry name" value="Pest_cryst_cen_dom_sf"/>
</dbReference>
<dbReference type="PANTHER" id="PTHR37003">
    <property type="entry name" value="ENDOTOXIN_N DOMAIN-CONTAINING PROTEIN-RELATED"/>
    <property type="match status" value="1"/>
</dbReference>
<dbReference type="PANTHER" id="PTHR37003:SF2">
    <property type="entry name" value="PESTICIDAL CRYSTAL PROTEIN N-TERMINAL DOMAIN-CONTAINING PROTEIN"/>
    <property type="match status" value="1"/>
</dbReference>
<dbReference type="Pfam" id="PF03944">
    <property type="entry name" value="Endotoxin_C"/>
    <property type="match status" value="1"/>
</dbReference>
<dbReference type="Pfam" id="PF09131">
    <property type="entry name" value="Endotoxin_mid"/>
    <property type="match status" value="1"/>
</dbReference>
<dbReference type="Pfam" id="PF03945">
    <property type="entry name" value="Endotoxin_N"/>
    <property type="match status" value="1"/>
</dbReference>
<dbReference type="SUPFAM" id="SSF51096">
    <property type="entry name" value="delta-Endotoxin (insectocide), middle domain"/>
    <property type="match status" value="1"/>
</dbReference>
<dbReference type="SUPFAM" id="SSF56849">
    <property type="entry name" value="delta-Endotoxin (insectocide), N-terminal domain"/>
    <property type="match status" value="1"/>
</dbReference>
<dbReference type="SUPFAM" id="SSF49785">
    <property type="entry name" value="Galactose-binding domain-like"/>
    <property type="match status" value="1"/>
</dbReference>
<gene>
    <name type="primary">cry2Ad</name>
    <name type="synonym">cry2</name>
    <name type="synonym">cryIIA(d)</name>
</gene>
<comment type="function">
    <text>Promotes colloidosmotic lysis by binding to the midgut epithelial cells of insects.</text>
</comment>
<comment type="developmental stage">
    <text>The crystal protein is produced during sporulation and is accumulated both as an inclusion and as part of the spore coat.</text>
</comment>
<comment type="miscellaneous">
    <text>Toxic segment of the protein is located in the N-terminus.</text>
</comment>
<comment type="similarity">
    <text evidence="1">Belongs to the delta endotoxin family.</text>
</comment>
<sequence>MNSVLNSGRNTICDAYNVVVHDPFSFQHKSLDTIQKEWMEWKKDNHSLYVDPIVGTVASFLLKKLGSLIGKRILSELRNLIFPSGSTNLMEDILRETEKFLNQKLNTDTLSRVNAELTGLQANVEEFNRQVDNFLNPNRNAVPLSITSSVNTMQQLFLNRLSQFQMQGYQLLLLPLFAQAANLHLSFIRDVILNAEEWGISAATLRTYQNHLRNYTRDYSNYCIDTYQTAFRGLNTRLHDMLEFRTYMFLNVFEYVSIWSLFKYQSLLVSSGANLYASGSGPQQTQLFTSQDWPFLYSLFQVNSNYVLSGFSGASLFTTFPNIGGLPGSTTTQALLAARVNYSGGITSGSIGGSNFNQNFNCNTISPPLSTSFVRSWLDSGSDRQGVNTVTNWQTESFETTSGLRCGAFTPRGNSNYYPGYFIRNISGVSLVLRNEDLKRPLYYNEKRNIESPSGTPGGARAYMVSVHNKKNNIYAVHENGTMIHLAPEDNTGFTISPIHATQVNNQTRTFISEKFGNQGDSLRFEQSNTTARYTLRGNGNSYNLYLRVSSIGNSTIRVTINGRVYTASNVNTTTNNDGVNDNGARFSDINIGNVVASSNSDVPLDINVTLNSGTQFDLMNIMLVPTNISPLY</sequence>
<keyword id="KW-0749">Sporulation</keyword>
<keyword id="KW-0800">Toxin</keyword>
<keyword id="KW-0843">Virulence</keyword>
<name>CR2AD_BACTU</name>
<reference key="1">
    <citation type="submission" date="1999-11" db="EMBL/GenBank/DDBJ databases">
        <title>Nucleotide sequence of a new Bacillus thuringiensis cry2-type gene.</title>
        <authorList>
            <person name="Choi S.-K."/>
            <person name="Shin B.-S."/>
            <person name="Park S.-H."/>
        </authorList>
    </citation>
    <scope>NUCLEOTIDE SEQUENCE [GENOMIC DNA]</scope>
    <source>
        <strain>BR30</strain>
    </source>
</reference>
<proteinExistence type="evidence at transcript level"/>